<reference key="1">
    <citation type="journal article" date="1988" name="Virology">
        <title>Analysis of a large cluster of nonessential genes deleted from a vaccinia virus terminal transposition mutant.</title>
        <authorList>
            <person name="Kotwal G.J."/>
            <person name="Moss B."/>
        </authorList>
    </citation>
    <scope>NUCLEOTIDE SEQUENCE [GENOMIC DNA]</scope>
</reference>
<reference key="2">
    <citation type="submission" date="2003-02" db="EMBL/GenBank/DDBJ databases">
        <title>Sequencing of the coding region of Vaccinia-WR to an average 9-fold redundancy and an error rate of 0.16/10kb.</title>
        <authorList>
            <person name="Esposito J.J."/>
            <person name="Frace A.M."/>
            <person name="Sammons S.A."/>
            <person name="Olsen-Rasmussen M."/>
            <person name="Osborne J."/>
            <person name="Wohlhueter R."/>
        </authorList>
    </citation>
    <scope>NUCLEOTIDE SEQUENCE [LARGE SCALE GENOMIC DNA]</scope>
</reference>
<reference key="3">
    <citation type="journal article" date="2015" name="J. Virol.">
        <title>Deciphering poxvirus gene expression by RNA sequencing and ribosome profiling.</title>
        <authorList>
            <person name="Yang Z."/>
            <person name="Cao S."/>
            <person name="Martens C.A."/>
            <person name="Porcella S.F."/>
            <person name="Xie Z."/>
            <person name="Ma M."/>
            <person name="Shen B."/>
            <person name="Moss B."/>
        </authorList>
    </citation>
    <scope>INDUCTION</scope>
</reference>
<gene>
    <name type="primary">OPG30</name>
    <name type="synonym">C5L</name>
</gene>
<gene>
    <name type="ORF">VACWR023</name>
</gene>
<sequence>MAYMNRSDLDKLKHENIFSGNIIEDAKEFVFGSRKIYTDSVDDLIELYSLAKYLNNENLKDVVIERMDYVCKYIGKDNWSTIYSFYKENGLRNSFLRQYINNNIEEICNTDQFLKLDVDSVCDILDNDEIVVTREYTILNMVLRWLENKRVNIDDFTKVMFVIRFKFITYSELTNAIKKIAPEYRQCLQDLYHMKITRPRHFDN</sequence>
<name>PG030_VACCW</name>
<accession>P17367</accession>
<accession>Q76ZY5</accession>
<evidence type="ECO:0000269" key="1">
    <source>
    </source>
</evidence>
<evidence type="ECO:0000305" key="2"/>
<feature type="chain" id="PRO_0000099381" description="Protein OPG030">
    <location>
        <begin position="1"/>
        <end position="204"/>
    </location>
</feature>
<feature type="domain" description="BACK">
    <location>
        <begin position="95"/>
        <end position="177"/>
    </location>
</feature>
<keyword id="KW-0244">Early protein</keyword>
<keyword id="KW-1185">Reference proteome</keyword>
<protein>
    <recommendedName>
        <fullName>Protein OPG030</fullName>
    </recommendedName>
</protein>
<dbReference type="EMBL" id="M22812">
    <property type="protein sequence ID" value="AAA69603.1"/>
    <property type="molecule type" value="Genomic_DNA"/>
</dbReference>
<dbReference type="EMBL" id="AY243312">
    <property type="protein sequence ID" value="AAO89302.1"/>
    <property type="molecule type" value="Genomic_DNA"/>
</dbReference>
<dbReference type="PIR" id="C33348">
    <property type="entry name" value="WZVZB3"/>
</dbReference>
<dbReference type="RefSeq" id="YP_232905.1">
    <property type="nucleotide sequence ID" value="NC_006998.1"/>
</dbReference>
<dbReference type="SMR" id="P17367"/>
<dbReference type="DNASU" id="3707638"/>
<dbReference type="GeneID" id="3707638"/>
<dbReference type="KEGG" id="vg:3707638"/>
<dbReference type="Proteomes" id="UP000000344">
    <property type="component" value="Genome"/>
</dbReference>
<dbReference type="Gene3D" id="1.25.40.420">
    <property type="match status" value="1"/>
</dbReference>
<dbReference type="InterPro" id="IPR011705">
    <property type="entry name" value="BACK"/>
</dbReference>
<dbReference type="InterPro" id="IPR009177">
    <property type="entry name" value="Orthopox_C5"/>
</dbReference>
<dbReference type="PANTHER" id="PTHR45632:SF5">
    <property type="entry name" value="KELCH-LIKE PROTEIN 22"/>
    <property type="match status" value="1"/>
</dbReference>
<dbReference type="PANTHER" id="PTHR45632">
    <property type="entry name" value="LD33804P"/>
    <property type="match status" value="1"/>
</dbReference>
<dbReference type="Pfam" id="PF07707">
    <property type="entry name" value="BACK"/>
    <property type="match status" value="1"/>
</dbReference>
<dbReference type="PIRSF" id="PIRSF003781">
    <property type="entry name" value="VAC_C5L"/>
    <property type="match status" value="1"/>
</dbReference>
<dbReference type="SMART" id="SM00875">
    <property type="entry name" value="BACK"/>
    <property type="match status" value="1"/>
</dbReference>
<organismHost>
    <name type="scientific">Bos taurus</name>
    <name type="common">Bovine</name>
    <dbReference type="NCBI Taxonomy" id="9913"/>
</organismHost>
<proteinExistence type="evidence at transcript level"/>
<organism>
    <name type="scientific">Vaccinia virus (strain Western Reserve)</name>
    <name type="common">VACV</name>
    <name type="synonym">Vaccinia virus (strain WR)</name>
    <dbReference type="NCBI Taxonomy" id="10254"/>
    <lineage>
        <taxon>Viruses</taxon>
        <taxon>Varidnaviria</taxon>
        <taxon>Bamfordvirae</taxon>
        <taxon>Nucleocytoviricota</taxon>
        <taxon>Pokkesviricetes</taxon>
        <taxon>Chitovirales</taxon>
        <taxon>Poxviridae</taxon>
        <taxon>Chordopoxvirinae</taxon>
        <taxon>Orthopoxvirus</taxon>
        <taxon>Vaccinia virus</taxon>
    </lineage>
</organism>
<comment type="induction">
    <text evidence="1">Expressed in the early phase of the viral replicative cycle.</text>
</comment>
<comment type="similarity">
    <text evidence="2">Belongs to the orthopoxvirus OPG030 family.</text>
</comment>